<sequence length="301" mass="33891">MEDEVIRIAKKMDKMVQKKNAAGALDLLKELKNIPMTLELLQSTRIGMSVNAIRKQSTDEEVTSLAKSLIKSWKKLLDGPSTDKDSEEKKKDTAVTSQNSPEAREESSSSGNMSSRKDETNARDTYVSSFPRAPSTSDSVRLKCREMLAAALRTGDDYIAIGADEEELGSQIEEAIYQEIRNTDMKYKNRVRSRISNLKDAKNPNLRKNVLCGNIPPDLFARMTAEEMASDELKEMRKNLTKEAIREHQMAKTGGTQTDLFTCGKCKKKNCTYTQVQTRSADEPMTTFVVCNECGNRWKFC</sequence>
<evidence type="ECO:0000250" key="1"/>
<evidence type="ECO:0000250" key="2">
    <source>
        <dbReference type="UniProtKB" id="P23193"/>
    </source>
</evidence>
<evidence type="ECO:0000250" key="3">
    <source>
        <dbReference type="UniProtKB" id="Q15560"/>
    </source>
</evidence>
<evidence type="ECO:0000255" key="4">
    <source>
        <dbReference type="PROSITE-ProRule" id="PRU00472"/>
    </source>
</evidence>
<evidence type="ECO:0000255" key="5">
    <source>
        <dbReference type="PROSITE-ProRule" id="PRU00649"/>
    </source>
</evidence>
<evidence type="ECO:0000255" key="6">
    <source>
        <dbReference type="PROSITE-ProRule" id="PRU00651"/>
    </source>
</evidence>
<evidence type="ECO:0000256" key="7">
    <source>
        <dbReference type="SAM" id="MobiDB-lite"/>
    </source>
</evidence>
<evidence type="ECO:0000305" key="8"/>
<protein>
    <recommendedName>
        <fullName>Transcription elongation factor A protein 1</fullName>
    </recommendedName>
    <alternativeName>
        <fullName>Transcription elongation factor S-II protein 1</fullName>
    </alternativeName>
</protein>
<comment type="function">
    <text evidence="1">Necessary for efficient RNA polymerase II transcription elongation past template-encoded arresting sites. The arresting sites in DNA have the property of trapping a certain fraction of elongating RNA polymerases that pass through, resulting in locked ternary complexes. Cleavage of the nascent transcript by S-II allows the resumption of elongation from the new 3'-terminus (By similarity).</text>
</comment>
<comment type="subunit">
    <text evidence="1 2">Interacts with EAF2 (By similarity). Associates with UBR5 and forms a transcription regulatory complex made of CDK9, Pol II, UBR5 and TCEA1/TFIIS (By similarity). Part of TBP-based Pol II pre-initiation complex (PIC), in which Pol II core assembles with general transcription factors and other specific initiation factors including GTF2E1, GTF2E2, GTF2F1, GTF2F2, TCEA1, ERCC2, ERCC3, GTF2H2, GTF2H3, GTF2H4, GTF2H5, GTF2A1, GTF2A2, GTF2B and TBP; this large multi-subunit PIC complex mediates DNA unwinding and targets Pol II core to the transcription start site where the first phosphodiester bond forms (By similarity).</text>
</comment>
<comment type="subcellular location">
    <subcellularLocation>
        <location evidence="5 6">Nucleus</location>
    </subcellularLocation>
</comment>
<comment type="miscellaneous">
    <text evidence="1">S-II binds to RNA-polymerase II in the absence of transcription.</text>
</comment>
<comment type="similarity">
    <text evidence="8">Belongs to the TFS-II family.</text>
</comment>
<organism>
    <name type="scientific">Bos taurus</name>
    <name type="common">Bovine</name>
    <dbReference type="NCBI Taxonomy" id="9913"/>
    <lineage>
        <taxon>Eukaryota</taxon>
        <taxon>Metazoa</taxon>
        <taxon>Chordata</taxon>
        <taxon>Craniata</taxon>
        <taxon>Vertebrata</taxon>
        <taxon>Euteleostomi</taxon>
        <taxon>Mammalia</taxon>
        <taxon>Eutheria</taxon>
        <taxon>Laurasiatheria</taxon>
        <taxon>Artiodactyla</taxon>
        <taxon>Ruminantia</taxon>
        <taxon>Pecora</taxon>
        <taxon>Bovidae</taxon>
        <taxon>Bovinae</taxon>
        <taxon>Bos</taxon>
    </lineage>
</organism>
<keyword id="KW-0007">Acetylation</keyword>
<keyword id="KW-0238">DNA-binding</keyword>
<keyword id="KW-1017">Isopeptide bond</keyword>
<keyword id="KW-0479">Metal-binding</keyword>
<keyword id="KW-0539">Nucleus</keyword>
<keyword id="KW-0597">Phosphoprotein</keyword>
<keyword id="KW-1185">Reference proteome</keyword>
<keyword id="KW-0804">Transcription</keyword>
<keyword id="KW-0805">Transcription regulation</keyword>
<keyword id="KW-0832">Ubl conjugation</keyword>
<keyword id="KW-0862">Zinc</keyword>
<keyword id="KW-0863">Zinc-finger</keyword>
<feature type="chain" id="PRO_0000285502" description="Transcription elongation factor A protein 1">
    <location>
        <begin position="1"/>
        <end position="301"/>
    </location>
</feature>
<feature type="domain" description="TFIIS N-terminal" evidence="5">
    <location>
        <begin position="3"/>
        <end position="80"/>
    </location>
</feature>
<feature type="domain" description="TFIIS central" evidence="6">
    <location>
        <begin position="140"/>
        <end position="256"/>
    </location>
</feature>
<feature type="zinc finger region" description="TFIIS-type" evidence="4">
    <location>
        <begin position="259"/>
        <end position="299"/>
    </location>
</feature>
<feature type="region of interest" description="Disordered" evidence="7">
    <location>
        <begin position="76"/>
        <end position="139"/>
    </location>
</feature>
<feature type="compositionally biased region" description="Basic and acidic residues" evidence="7">
    <location>
        <begin position="76"/>
        <end position="93"/>
    </location>
</feature>
<feature type="binding site" evidence="4">
    <location>
        <position position="263"/>
    </location>
    <ligand>
        <name>Zn(2+)</name>
        <dbReference type="ChEBI" id="CHEBI:29105"/>
    </ligand>
</feature>
<feature type="binding site" evidence="4">
    <location>
        <position position="266"/>
    </location>
    <ligand>
        <name>Zn(2+)</name>
        <dbReference type="ChEBI" id="CHEBI:29105"/>
    </ligand>
</feature>
<feature type="binding site" evidence="4">
    <location>
        <position position="291"/>
    </location>
    <ligand>
        <name>Zn(2+)</name>
        <dbReference type="ChEBI" id="CHEBI:29105"/>
    </ligand>
</feature>
<feature type="binding site" evidence="4">
    <location>
        <position position="294"/>
    </location>
    <ligand>
        <name>Zn(2+)</name>
        <dbReference type="ChEBI" id="CHEBI:29105"/>
    </ligand>
</feature>
<feature type="modified residue" description="N-acetylmethionine" evidence="2">
    <location>
        <position position="1"/>
    </location>
</feature>
<feature type="modified residue" description="Phosphoserine" evidence="2">
    <location>
        <position position="57"/>
    </location>
</feature>
<feature type="modified residue" description="Phosphoserine" evidence="2">
    <location>
        <position position="81"/>
    </location>
</feature>
<feature type="modified residue" description="Phosphoserine" evidence="2">
    <location>
        <position position="97"/>
    </location>
</feature>
<feature type="modified residue" description="Phosphoserine" evidence="2">
    <location>
        <position position="100"/>
    </location>
</feature>
<feature type="cross-link" description="Glycyl lysine isopeptide (Lys-Gly) (interchain with G-Cter in ubiquitin)" evidence="3">
    <location>
        <position position="55"/>
    </location>
</feature>
<dbReference type="EMBL" id="BC114117">
    <property type="protein sequence ID" value="AAI14118.1"/>
    <property type="molecule type" value="mRNA"/>
</dbReference>
<dbReference type="RefSeq" id="NP_001039390.1">
    <property type="nucleotide sequence ID" value="NM_001045925.1"/>
</dbReference>
<dbReference type="SMR" id="Q29RL9"/>
<dbReference type="FunCoup" id="Q29RL9">
    <property type="interactions" value="5382"/>
</dbReference>
<dbReference type="STRING" id="9913.ENSBTAP00000004499"/>
<dbReference type="PaxDb" id="9913-ENSBTAP00000004499"/>
<dbReference type="GeneID" id="505722"/>
<dbReference type="KEGG" id="bta:505722"/>
<dbReference type="CTD" id="6917"/>
<dbReference type="VEuPathDB" id="HostDB:ENSBTAG00000003460"/>
<dbReference type="eggNOG" id="KOG1105">
    <property type="taxonomic scope" value="Eukaryota"/>
</dbReference>
<dbReference type="HOGENOM" id="CLU_037637_2_0_1"/>
<dbReference type="InParanoid" id="Q29RL9"/>
<dbReference type="OMA" id="RFVVMTH"/>
<dbReference type="OrthoDB" id="44867at2759"/>
<dbReference type="Reactome" id="R-BTA-674695">
    <property type="pathway name" value="RNA Polymerase II Pre-transcription Events"/>
</dbReference>
<dbReference type="Reactome" id="R-BTA-6781823">
    <property type="pathway name" value="Formation of TC-NER Pre-Incision Complex"/>
</dbReference>
<dbReference type="Reactome" id="R-BTA-6782135">
    <property type="pathway name" value="Dual incision in TC-NER"/>
</dbReference>
<dbReference type="Reactome" id="R-BTA-6782210">
    <property type="pathway name" value="Gap-filling DNA repair synthesis and ligation in TC-NER"/>
</dbReference>
<dbReference type="Reactome" id="R-BTA-6796648">
    <property type="pathway name" value="TP53 Regulates Transcription of DNA Repair Genes"/>
</dbReference>
<dbReference type="Reactome" id="R-BTA-75955">
    <property type="pathway name" value="RNA Polymerase II Transcription Elongation"/>
</dbReference>
<dbReference type="Proteomes" id="UP000009136">
    <property type="component" value="Chromosome 14"/>
</dbReference>
<dbReference type="Bgee" id="ENSBTAG00000003460">
    <property type="expression patterns" value="Expressed in nasopharynx and 106 other cell types or tissues"/>
</dbReference>
<dbReference type="GO" id="GO:0005634">
    <property type="term" value="C:nucleus"/>
    <property type="evidence" value="ECO:0000318"/>
    <property type="project" value="GO_Central"/>
</dbReference>
<dbReference type="GO" id="GO:0005669">
    <property type="term" value="C:transcription factor TFIID complex"/>
    <property type="evidence" value="ECO:0000318"/>
    <property type="project" value="GO_Central"/>
</dbReference>
<dbReference type="GO" id="GO:0003677">
    <property type="term" value="F:DNA binding"/>
    <property type="evidence" value="ECO:0007669"/>
    <property type="project" value="UniProtKB-KW"/>
</dbReference>
<dbReference type="GO" id="GO:0008270">
    <property type="term" value="F:zinc ion binding"/>
    <property type="evidence" value="ECO:0007669"/>
    <property type="project" value="UniProtKB-KW"/>
</dbReference>
<dbReference type="GO" id="GO:0045944">
    <property type="term" value="P:positive regulation of transcription by RNA polymerase II"/>
    <property type="evidence" value="ECO:0000318"/>
    <property type="project" value="GO_Central"/>
</dbReference>
<dbReference type="GO" id="GO:0006368">
    <property type="term" value="P:transcription elongation by RNA polymerase II"/>
    <property type="evidence" value="ECO:0007669"/>
    <property type="project" value="InterPro"/>
</dbReference>
<dbReference type="CDD" id="cd00183">
    <property type="entry name" value="TFIIS_I"/>
    <property type="match status" value="1"/>
</dbReference>
<dbReference type="CDD" id="cd13749">
    <property type="entry name" value="Zn-ribbon_TFIIS"/>
    <property type="match status" value="1"/>
</dbReference>
<dbReference type="FunFam" id="2.20.25.10:FF:000001">
    <property type="entry name" value="Probable Transcription elongation factor S-II"/>
    <property type="match status" value="1"/>
</dbReference>
<dbReference type="FunFam" id="1.10.472.30:FF:000001">
    <property type="entry name" value="Transcription elongation factor A (SII), 1"/>
    <property type="match status" value="1"/>
</dbReference>
<dbReference type="FunFam" id="1.20.930.10:FF:000002">
    <property type="entry name" value="Transcription elongation factor A (SII), 1"/>
    <property type="match status" value="1"/>
</dbReference>
<dbReference type="Gene3D" id="2.20.25.10">
    <property type="match status" value="1"/>
</dbReference>
<dbReference type="Gene3D" id="1.20.930.10">
    <property type="entry name" value="Conserved domain common to transcription factors TFIIS, elongin A, CRSP70"/>
    <property type="match status" value="1"/>
</dbReference>
<dbReference type="Gene3D" id="1.10.472.30">
    <property type="entry name" value="Transcription elongation factor S-II, central domain"/>
    <property type="match status" value="1"/>
</dbReference>
<dbReference type="InterPro" id="IPR035100">
    <property type="entry name" value="TF_IIS-typ"/>
</dbReference>
<dbReference type="InterPro" id="IPR003617">
    <property type="entry name" value="TFIIS/CRSP70_N_sub"/>
</dbReference>
<dbReference type="InterPro" id="IPR035441">
    <property type="entry name" value="TFIIS/LEDGF_dom_sf"/>
</dbReference>
<dbReference type="InterPro" id="IPR003618">
    <property type="entry name" value="TFIIS_cen_dom"/>
</dbReference>
<dbReference type="InterPro" id="IPR036575">
    <property type="entry name" value="TFIIS_cen_dom_sf"/>
</dbReference>
<dbReference type="InterPro" id="IPR017923">
    <property type="entry name" value="TFIIS_N"/>
</dbReference>
<dbReference type="InterPro" id="IPR006289">
    <property type="entry name" value="TFSII"/>
</dbReference>
<dbReference type="InterPro" id="IPR001222">
    <property type="entry name" value="Znf_TFIIS"/>
</dbReference>
<dbReference type="NCBIfam" id="TIGR01385">
    <property type="entry name" value="TFSII"/>
    <property type="match status" value="1"/>
</dbReference>
<dbReference type="PANTHER" id="PTHR11477:SF1">
    <property type="entry name" value="TRANSCRIPTION ELONGATION FACTOR A PROTEIN 1"/>
    <property type="match status" value="1"/>
</dbReference>
<dbReference type="PANTHER" id="PTHR11477">
    <property type="entry name" value="TRANSCRIPTION FACTOR S-II ZINC FINGER DOMAIN-CONTAINING PROTEIN"/>
    <property type="match status" value="1"/>
</dbReference>
<dbReference type="Pfam" id="PF08711">
    <property type="entry name" value="Med26"/>
    <property type="match status" value="1"/>
</dbReference>
<dbReference type="Pfam" id="PF07500">
    <property type="entry name" value="TFIIS_M"/>
    <property type="match status" value="1"/>
</dbReference>
<dbReference type="Pfam" id="PF01096">
    <property type="entry name" value="Zn_ribbon_TFIIS"/>
    <property type="match status" value="1"/>
</dbReference>
<dbReference type="PIRSF" id="PIRSF006704">
    <property type="entry name" value="TF_IIS"/>
    <property type="match status" value="1"/>
</dbReference>
<dbReference type="SMART" id="SM00510">
    <property type="entry name" value="TFS2M"/>
    <property type="match status" value="1"/>
</dbReference>
<dbReference type="SMART" id="SM00509">
    <property type="entry name" value="TFS2N"/>
    <property type="match status" value="1"/>
</dbReference>
<dbReference type="SMART" id="SM00440">
    <property type="entry name" value="ZnF_C2C2"/>
    <property type="match status" value="1"/>
</dbReference>
<dbReference type="SUPFAM" id="SSF47676">
    <property type="entry name" value="Conserved domain common to transcription factors TFIIS, elongin A, CRSP70"/>
    <property type="match status" value="1"/>
</dbReference>
<dbReference type="SUPFAM" id="SSF46942">
    <property type="entry name" value="Elongation factor TFIIS domain 2"/>
    <property type="match status" value="1"/>
</dbReference>
<dbReference type="SUPFAM" id="SSF57783">
    <property type="entry name" value="Zinc beta-ribbon"/>
    <property type="match status" value="1"/>
</dbReference>
<dbReference type="PROSITE" id="PS51321">
    <property type="entry name" value="TFIIS_CENTRAL"/>
    <property type="match status" value="1"/>
</dbReference>
<dbReference type="PROSITE" id="PS51319">
    <property type="entry name" value="TFIIS_N"/>
    <property type="match status" value="1"/>
</dbReference>
<dbReference type="PROSITE" id="PS00466">
    <property type="entry name" value="ZF_TFIIS_1"/>
    <property type="match status" value="1"/>
</dbReference>
<dbReference type="PROSITE" id="PS51133">
    <property type="entry name" value="ZF_TFIIS_2"/>
    <property type="match status" value="1"/>
</dbReference>
<proteinExistence type="evidence at transcript level"/>
<gene>
    <name type="primary">TCEA1</name>
</gene>
<accession>Q29RL9</accession>
<name>TCEA1_BOVIN</name>
<reference key="1">
    <citation type="submission" date="2006-02" db="EMBL/GenBank/DDBJ databases">
        <authorList>
            <consortium name="NIH - Mammalian Gene Collection (MGC) project"/>
        </authorList>
    </citation>
    <scope>NUCLEOTIDE SEQUENCE [LARGE SCALE MRNA]</scope>
    <source>
        <strain>Hereford</strain>
        <tissue>Hypothalamus</tissue>
    </source>
</reference>